<name>YL274_MIMIV</name>
<organismHost>
    <name type="scientific">Acanthamoeba polyphaga</name>
    <name type="common">Amoeba</name>
    <dbReference type="NCBI Taxonomy" id="5757"/>
</organismHost>
<evidence type="ECO:0000255" key="1"/>
<evidence type="ECO:0000269" key="2">
    <source>
    </source>
</evidence>
<organism>
    <name type="scientific">Acanthamoeba polyphaga mimivirus</name>
    <name type="common">APMV</name>
    <dbReference type="NCBI Taxonomy" id="212035"/>
    <lineage>
        <taxon>Viruses</taxon>
        <taxon>Varidnaviria</taxon>
        <taxon>Bamfordvirae</taxon>
        <taxon>Nucleocytoviricota</taxon>
        <taxon>Megaviricetes</taxon>
        <taxon>Imitervirales</taxon>
        <taxon>Mimiviridae</taxon>
        <taxon>Megamimivirinae</taxon>
        <taxon>Mimivirus</taxon>
        <taxon>Mimivirus bradfordmassiliense</taxon>
    </lineage>
</organism>
<gene>
    <name type="ordered locus">MIMI_L274</name>
</gene>
<sequence length="212" mass="23506">MKNLTIGAIFLIFFAVSAFASAPCPKKLADTTCPREPYSFEGMKRQEPIKGRNVGWFQCQATMTVHDPVTTAVLVTQPTFTFNLSTLYHNSCGCWKTVTTIPGDAVKMEYGNGLPGQAMYGSCFYATWADLAGNPVETVGFARNVVGVHRDLIYVSRATNELVVHQSIYPLGRDQVGDEYVLVRHFDPVTKGIDWVQAVYCTKIQDQLEPLP</sequence>
<dbReference type="EMBL" id="AY653733">
    <property type="protein sequence ID" value="AAV50546.1"/>
    <property type="molecule type" value="Genomic_DNA"/>
</dbReference>
<dbReference type="KEGG" id="vg:9924884"/>
<dbReference type="OrthoDB" id="12927at10239"/>
<dbReference type="Proteomes" id="UP000001134">
    <property type="component" value="Genome"/>
</dbReference>
<dbReference type="GO" id="GO:0044423">
    <property type="term" value="C:virion component"/>
    <property type="evidence" value="ECO:0007669"/>
    <property type="project" value="UniProtKB-KW"/>
</dbReference>
<dbReference type="InterPro" id="IPR043849">
    <property type="entry name" value="DUF5859"/>
</dbReference>
<dbReference type="Pfam" id="PF19177">
    <property type="entry name" value="DUF5859"/>
    <property type="match status" value="1"/>
</dbReference>
<comment type="subcellular location">
    <subcellularLocation>
        <location evidence="2">Virion</location>
    </subcellularLocation>
</comment>
<keyword id="KW-1185">Reference proteome</keyword>
<keyword id="KW-0732">Signal</keyword>
<keyword id="KW-0946">Virion</keyword>
<feature type="signal peptide" evidence="1">
    <location>
        <begin position="1"/>
        <end position="20"/>
    </location>
</feature>
<feature type="chain" id="PRO_0000251111" description="Uncharacterized protein L274">
    <location>
        <begin position="21"/>
        <end position="212"/>
    </location>
</feature>
<accession>Q5UPU8</accession>
<proteinExistence type="evidence at protein level"/>
<protein>
    <recommendedName>
        <fullName>Uncharacterized protein L274</fullName>
    </recommendedName>
</protein>
<reference key="1">
    <citation type="journal article" date="2004" name="Science">
        <title>The 1.2-megabase genome sequence of Mimivirus.</title>
        <authorList>
            <person name="Raoult D."/>
            <person name="Audic S."/>
            <person name="Robert C."/>
            <person name="Abergel C."/>
            <person name="Renesto P."/>
            <person name="Ogata H."/>
            <person name="La Scola B."/>
            <person name="Susan M."/>
            <person name="Claverie J.-M."/>
        </authorList>
    </citation>
    <scope>NUCLEOTIDE SEQUENCE [LARGE SCALE GENOMIC DNA]</scope>
    <source>
        <strain>Rowbotham-Bradford</strain>
    </source>
</reference>
<reference key="2">
    <citation type="journal article" date="2006" name="J. Virol.">
        <title>Mimivirus giant particles incorporate a large fraction of anonymous and unique gene products.</title>
        <authorList>
            <person name="Renesto P."/>
            <person name="Abergel C."/>
            <person name="Decloquement P."/>
            <person name="Moinier D."/>
            <person name="Azza S."/>
            <person name="Ogata H."/>
            <person name="Fourquet P."/>
            <person name="Gorvel J.-P."/>
            <person name="Claverie J.-M."/>
            <person name="Raoult D."/>
        </authorList>
    </citation>
    <scope>IDENTIFICATION BY MASS SPECTROMETRY [LARGE SCALE ANALYSIS]</scope>
    <scope>SUBCELLULAR LOCATION</scope>
</reference>